<name>GSFI_PENAE</name>
<dbReference type="EC" id="1.14.14.-" evidence="4"/>
<dbReference type="EMBL" id="GU574478">
    <property type="protein sequence ID" value="ADI24948.1"/>
    <property type="molecule type" value="Genomic_DNA"/>
</dbReference>
<dbReference type="SMR" id="D7PI14"/>
<dbReference type="BioCyc" id="MetaCyc:MONOMER-19271"/>
<dbReference type="UniPathway" id="UPA00213"/>
<dbReference type="GO" id="GO:0071949">
    <property type="term" value="F:FAD binding"/>
    <property type="evidence" value="ECO:0007669"/>
    <property type="project" value="InterPro"/>
</dbReference>
<dbReference type="GO" id="GO:0140907">
    <property type="term" value="F:flavin-dependent halogenase activity"/>
    <property type="evidence" value="ECO:0000314"/>
    <property type="project" value="GO_Central"/>
</dbReference>
<dbReference type="GO" id="GO:0004497">
    <property type="term" value="F:monooxygenase activity"/>
    <property type="evidence" value="ECO:0007669"/>
    <property type="project" value="UniProtKB-KW"/>
</dbReference>
<dbReference type="GO" id="GO:0140878">
    <property type="term" value="P:griseofulvin biosynthetic process"/>
    <property type="evidence" value="ECO:0000314"/>
    <property type="project" value="GO_Central"/>
</dbReference>
<dbReference type="GO" id="GO:0016114">
    <property type="term" value="P:terpenoid biosynthetic process"/>
    <property type="evidence" value="ECO:0007669"/>
    <property type="project" value="UniProtKB-UniPathway"/>
</dbReference>
<dbReference type="Gene3D" id="3.50.50.60">
    <property type="entry name" value="FAD/NAD(P)-binding domain"/>
    <property type="match status" value="1"/>
</dbReference>
<dbReference type="InterPro" id="IPR002938">
    <property type="entry name" value="FAD-bd"/>
</dbReference>
<dbReference type="InterPro" id="IPR036188">
    <property type="entry name" value="FAD/NAD-bd_sf"/>
</dbReference>
<dbReference type="InterPro" id="IPR050816">
    <property type="entry name" value="Flavin-dep_Halogenase_NPB"/>
</dbReference>
<dbReference type="PANTHER" id="PTHR43747:SF5">
    <property type="entry name" value="FAD-BINDING DOMAIN-CONTAINING PROTEIN"/>
    <property type="match status" value="1"/>
</dbReference>
<dbReference type="PANTHER" id="PTHR43747">
    <property type="entry name" value="FAD-BINDING PROTEIN"/>
    <property type="match status" value="1"/>
</dbReference>
<dbReference type="Pfam" id="PF01494">
    <property type="entry name" value="FAD_binding_3"/>
    <property type="match status" value="1"/>
</dbReference>
<dbReference type="SUPFAM" id="SSF51905">
    <property type="entry name" value="FAD/NAD(P)-binding domain"/>
    <property type="match status" value="1"/>
</dbReference>
<organism>
    <name type="scientific">Penicillium aethiopicum</name>
    <dbReference type="NCBI Taxonomy" id="36650"/>
    <lineage>
        <taxon>Eukaryota</taxon>
        <taxon>Fungi</taxon>
        <taxon>Dikarya</taxon>
        <taxon>Ascomycota</taxon>
        <taxon>Pezizomycotina</taxon>
        <taxon>Eurotiomycetes</taxon>
        <taxon>Eurotiomycetidae</taxon>
        <taxon>Eurotiales</taxon>
        <taxon>Aspergillaceae</taxon>
        <taxon>Penicillium</taxon>
    </lineage>
</organism>
<proteinExistence type="evidence at protein level"/>
<protein>
    <recommendedName>
        <fullName evidence="6">Flavin-dependent halogenase gsfI</fullName>
        <ecNumber evidence="4">1.14.14.-</ecNumber>
    </recommendedName>
    <alternativeName>
        <fullName evidence="6">Griseofulvin synthesis protein I</fullName>
    </alternativeName>
</protein>
<accession>D7PI14</accession>
<feature type="chain" id="PRO_0000436730" description="Flavin-dependent halogenase gsfI">
    <location>
        <begin position="1"/>
        <end position="533"/>
    </location>
</feature>
<feature type="binding site" evidence="1">
    <location>
        <position position="14"/>
    </location>
    <ligand>
        <name>FAD</name>
        <dbReference type="ChEBI" id="CHEBI:57692"/>
    </ligand>
</feature>
<feature type="binding site" evidence="1">
    <location>
        <position position="17"/>
    </location>
    <ligand>
        <name>FAD</name>
        <dbReference type="ChEBI" id="CHEBI:57692"/>
    </ligand>
</feature>
<feature type="binding site" evidence="1">
    <location>
        <position position="47"/>
    </location>
    <ligand>
        <name>FAD</name>
        <dbReference type="ChEBI" id="CHEBI:57692"/>
    </ligand>
</feature>
<feature type="binding site" evidence="1">
    <location>
        <position position="331"/>
    </location>
    <ligand>
        <name>chloride</name>
        <dbReference type="ChEBI" id="CHEBI:17996"/>
    </ligand>
</feature>
<feature type="binding site" evidence="1">
    <location>
        <position position="332"/>
    </location>
    <ligand>
        <name>chloride</name>
        <dbReference type="ChEBI" id="CHEBI:17996"/>
    </ligand>
</feature>
<sequence>MAIPQSCTVLVAGGGPGGSYTAAALAREGVDVVLLEADCHPRYHIGESLLPSMRYLLRFIDLEDTFEQHGFQKKLGAFFKLNAKSAGYTDFIRANGPNGYSWNVVRSESDEILFRHATKSGAKTFENVSLKSVNFEPYENDKFTSQDKLTNPGRPVSAEWKTKDGCSGTISFDYLVDATGRVGILSTKYLKNRKFNESFRNIAMWGYFKGNIPPSPGTDRENQPISEGMRDGSGWVWMLPLHNGTVSIGAVVRKDIFQAKKKALPEGTTEAQTLASLVALCPTISSYLEPAELASGIRQAADYSYSANAYAGPNFRIVGDAGCFIDPFFSSGHHLALSSALAAATSINACIRGDCNEFDASRWFAKKVDEGYTLFLVVVMAALKQIRMQEQPILSDLDEEGFDRAFTILRPVIQGAADKETAPKAKGESITETIDLCLTALNDLHDTELQRKLTSIVEAKGTPEQEQLLGKLSPDETAALHRMRAMHSILPMGELEDFENSNIDGFKARLEKGSLGLRRERALCRDHAGDLQM</sequence>
<keyword id="KW-0274">FAD</keyword>
<keyword id="KW-0285">Flavoprotein</keyword>
<keyword id="KW-0503">Monooxygenase</keyword>
<keyword id="KW-0560">Oxidoreductase</keyword>
<evidence type="ECO:0000250" key="1">
    <source>
        <dbReference type="UniProtKB" id="P95480"/>
    </source>
</evidence>
<evidence type="ECO:0000269" key="2">
    <source>
    </source>
</evidence>
<evidence type="ECO:0000269" key="3">
    <source>
    </source>
</evidence>
<evidence type="ECO:0000269" key="4">
    <source>
    </source>
</evidence>
<evidence type="ECO:0000269" key="5">
    <source>
    </source>
</evidence>
<evidence type="ECO:0000303" key="6">
    <source>
    </source>
</evidence>
<evidence type="ECO:0000305" key="7"/>
<gene>
    <name evidence="6" type="primary">gsfI</name>
</gene>
<reference key="1">
    <citation type="journal article" date="2010" name="Chem. Biol.">
        <title>Identification of the viridicatumtoxin and griseofulvin gene clusters from Penicillium aethiopicum.</title>
        <authorList>
            <person name="Chooi Y.H."/>
            <person name="Cacho R."/>
            <person name="Tang Y."/>
        </authorList>
    </citation>
    <scope>NUCLEOTIDE SEQUENCE [GENOMIC DNA]</scope>
    <scope>FUNCTION</scope>
    <scope>DISRUPTION PHENOTYPE</scope>
    <source>
        <strain>IBT 5753</strain>
    </source>
</reference>
<reference key="2">
    <citation type="journal article" date="1958" name="Nature">
        <title>Experimental ringworm in guinea pigs: oral treatment with griseofulvin.</title>
        <authorList>
            <person name="Gentles J.C."/>
        </authorList>
    </citation>
    <scope>BIOTECHNOLOGY</scope>
</reference>
<reference key="3">
    <citation type="journal article" date="1973" name="Nature">
        <title>Griseofulvin inhibits fungal mitosis.</title>
        <authorList>
            <person name="Gull K."/>
            <person name="Trinci A.P."/>
        </authorList>
    </citation>
    <scope>BIOTECHNOLOGY</scope>
</reference>
<reference key="4">
    <citation type="journal article" date="2013" name="ACS Chem. Biol.">
        <title>Complexity generation in fungal polyketide biosynthesis: a spirocycle-forming P450 in the concise pathway to the antifungal drug griseofulvin.</title>
        <authorList>
            <person name="Cacho R.A."/>
            <person name="Chooi Y.H."/>
            <person name="Zhou H."/>
            <person name="Tang Y."/>
        </authorList>
    </citation>
    <scope>FUNCTION</scope>
    <scope>PATHWAY</scope>
    <scope>DISRUPTION PHENOTYPE</scope>
    <scope>CATALYTIC ACTIVITY</scope>
</reference>
<comment type="function">
    <text evidence="3 4">Flavin-dependent halogenase; part of the gene cluster that mediates the biosynthesis of griseofulvin, an important antifungal drug that has been in use for a long time for treating dermatophyte infections (PubMed:20534346, PubMed:23978092). The first step of the pathway is the formation of the heptaketide backbone by gsfA which is initiated by priming with acetyl-CoA, followed by sequential condensations of 6 malonyl-CoA units (PubMed:20534346, PubMed:23978092). The resulting benzophenone can undergo a spontaneous dehydration to form norlichexanthone (PubMed:23978092). However, the true precursor for the griseofulvin biosynthesis is not norlichexanthone, but the heptaketide benzophenone that is O-methylated at 3-OH by gsfB to produce griseophenone D which is further methylated at 9-OH by gsfC to yield griseophenone C (PubMed:23978092). Griseophenone C is then substrate of halogenase gsfI which is responsible for the regio-specific chlorination at the C13 position to form griseophenone B (PubMed:23978092). The cytochrome P450 gsfF catalyzes the coupling of orcinol and phloroglucinol rings in griseophenone B to form desmethyl-dehydrogriseofulvin A which is further methylated at 5-OH by gsfD to yield dehydrogriseofulvin (PubMed:23978092). Finally, gsfE performs stereospecific reduction of enone 18 of dehydrogriseofulvin to afford the final product griseofulvin (PubMed:23978092).</text>
</comment>
<comment type="catalytic activity">
    <reaction evidence="4">
        <text>griseophenone C + FADH2 + chloride + O2 = griseophenone B + FAD + 2 H2O + H(+)</text>
        <dbReference type="Rhea" id="RHEA:73931"/>
        <dbReference type="ChEBI" id="CHEBI:15377"/>
        <dbReference type="ChEBI" id="CHEBI:15378"/>
        <dbReference type="ChEBI" id="CHEBI:15379"/>
        <dbReference type="ChEBI" id="CHEBI:17996"/>
        <dbReference type="ChEBI" id="CHEBI:57692"/>
        <dbReference type="ChEBI" id="CHEBI:58307"/>
        <dbReference type="ChEBI" id="CHEBI:193065"/>
        <dbReference type="ChEBI" id="CHEBI:193066"/>
    </reaction>
    <physiologicalReaction direction="left-to-right" evidence="4">
        <dbReference type="Rhea" id="RHEA:73932"/>
    </physiologicalReaction>
</comment>
<comment type="pathway">
    <text evidence="3 4">Secondary metabolite biosynthesis; terpenoid biosynthesis.</text>
</comment>
<comment type="disruption phenotype">
    <text evidence="3 4">Impairs the production of griseofulvin, but accumulates the intermediate dechlorogriseofulvin (PubMed:20534346, PubMed:23978092).</text>
</comment>
<comment type="biotechnology">
    <text evidence="2 5">Griseofulvin is a spirocyclic fungal natural product used in treatment of fungal dermatophytes (PubMed:13577889, PubMed:4583105).</text>
</comment>
<comment type="similarity">
    <text evidence="7">Belongs to the flavin-dependent halogenase family.</text>
</comment>